<sequence>MARLTKRRQADTKAIQHLWAAIEIIRNQKQIANIDRITKYMSRVHGMHPKETTRQLSLAVKDGLIVETLTVGCKGSKAGIEQEGYWLPGDEIDWETENHDWYCFECHLPGEVLICDLCFRVYHSKCLSDEFRLRDSSSPWQCPVCRSIKKKNTNKQEMGTYLRFIVSRMKERAIDLNKKGKDNKHPMYRRLVHSAVDVPTIQEKVNEGKYRSYEEFKADAQLLLHNTVIFYGADSEQADIARMLYKDTCHELDELQLCKNCFYLSNARPDNWFCYPCIPNHELVWAKMKGFGFWPAKVMQKEDNQVDVRFFGHHHQRAWIPSENIQDITVNIHRLHVKRSMGWKKACDELELHQRFLREGRFWKSKNEDRGEEEAESSISSTSNEQLKVTQEPRAKKGRRNQSVEPKKEEPEPETEAVSSSQEIPTMPQPIEKVSVSTQTKKLSASSPRMLHRSTQTTNDGVCQSMCHDKYTKIFNDFKDRMKSDHKRETERVVREALEKLRSEMEEEKRQAVNKAVANMQGEMDRKCKQVKEKCKEEFVEEIKKLATQHKQLISQTKKKQWCYNCEEEAMYHCCWNTSYCSIKCQQEHWHAEHKRTCRRKR</sequence>
<feature type="chain" id="PRO_0000211218" description="Zinc finger MYND domain-containing protein 11">
    <location>
        <begin position="1"/>
        <end position="602"/>
    </location>
</feature>
<feature type="domain" description="SAMD1-like winged helix (WH)" evidence="7">
    <location>
        <begin position="6"/>
        <end position="82"/>
    </location>
</feature>
<feature type="domain" description="Bromo" evidence="3">
    <location>
        <begin position="149"/>
        <end position="255"/>
    </location>
</feature>
<feature type="domain" description="PWWP" evidence="6">
    <location>
        <begin position="280"/>
        <end position="331"/>
    </location>
</feature>
<feature type="zinc finger region" description="PHD-type" evidence="5">
    <location>
        <begin position="100"/>
        <end position="148"/>
    </location>
</feature>
<feature type="zinc finger region" description="MYND-type" evidence="4 24">
    <location>
        <begin position="563"/>
        <end position="598"/>
    </location>
</feature>
<feature type="region of interest" description="Disordered" evidence="8">
    <location>
        <begin position="366"/>
        <end position="459"/>
    </location>
</feature>
<feature type="region of interest" description="Interaction with human adenovirus E1A">
    <location>
        <begin position="452"/>
        <end position="572"/>
    </location>
</feature>
<feature type="short sequence motif" description="Nuclear localization signal" evidence="2">
    <location>
        <begin position="394"/>
        <end position="400"/>
    </location>
</feature>
<feature type="compositionally biased region" description="Polar residues" evidence="8">
    <location>
        <begin position="435"/>
        <end position="459"/>
    </location>
</feature>
<feature type="binding site" evidence="21 31">
    <location>
        <position position="258"/>
    </location>
    <ligand>
        <name>Zn(2+)</name>
        <dbReference type="ChEBI" id="CHEBI:29105"/>
    </ligand>
</feature>
<feature type="binding site" evidence="21 31">
    <location>
        <position position="261"/>
    </location>
    <ligand>
        <name>Zn(2+)</name>
        <dbReference type="ChEBI" id="CHEBI:29105"/>
    </ligand>
</feature>
<feature type="binding site" evidence="21 31">
    <location>
        <position position="277"/>
    </location>
    <ligand>
        <name>Zn(2+)</name>
        <dbReference type="ChEBI" id="CHEBI:29105"/>
    </ligand>
</feature>
<feature type="binding site" evidence="21 31">
    <location>
        <position position="281"/>
    </location>
    <ligand>
        <name>Zn(2+)</name>
        <dbReference type="ChEBI" id="CHEBI:29105"/>
    </ligand>
</feature>
<feature type="binding site" evidence="4">
    <location>
        <position position="563"/>
    </location>
    <ligand>
        <name>Zn(2+)</name>
        <dbReference type="ChEBI" id="CHEBI:29105"/>
        <label>1</label>
    </ligand>
</feature>
<feature type="binding site" evidence="4">
    <location>
        <position position="566"/>
    </location>
    <ligand>
        <name>Zn(2+)</name>
        <dbReference type="ChEBI" id="CHEBI:29105"/>
        <label>1</label>
    </ligand>
</feature>
<feature type="binding site" evidence="4">
    <location>
        <position position="574"/>
    </location>
    <ligand>
        <name>Zn(2+)</name>
        <dbReference type="ChEBI" id="CHEBI:29105"/>
        <label>2</label>
    </ligand>
</feature>
<feature type="binding site" evidence="4">
    <location>
        <position position="575"/>
    </location>
    <ligand>
        <name>Zn(2+)</name>
        <dbReference type="ChEBI" id="CHEBI:29105"/>
        <label>2</label>
    </ligand>
</feature>
<feature type="binding site" evidence="4">
    <location>
        <position position="581"/>
    </location>
    <ligand>
        <name>Zn(2+)</name>
        <dbReference type="ChEBI" id="CHEBI:29105"/>
        <label>1</label>
    </ligand>
</feature>
<feature type="binding site" evidence="4">
    <location>
        <position position="585"/>
    </location>
    <ligand>
        <name>Zn(2+)</name>
        <dbReference type="ChEBI" id="CHEBI:29105"/>
        <label>1</label>
    </ligand>
</feature>
<feature type="binding site" evidence="4">
    <location>
        <position position="594"/>
    </location>
    <ligand>
        <name>Zn(2+)</name>
        <dbReference type="ChEBI" id="CHEBI:29105"/>
        <label>2</label>
    </ligand>
</feature>
<feature type="binding site" evidence="4">
    <location>
        <position position="598"/>
    </location>
    <ligand>
        <name>Zn(2+)</name>
        <dbReference type="ChEBI" id="CHEBI:29105"/>
        <label>2</label>
    </ligand>
</feature>
<feature type="modified residue" description="Phosphoserine" evidence="33 34">
    <location>
        <position position="421"/>
    </location>
</feature>
<feature type="cross-link" description="Glycyl lysine isopeptide (Lys-Gly) (interchain with G-Cter in SUMO2)" evidence="37">
    <location>
        <position position="366"/>
    </location>
</feature>
<feature type="cross-link" description="Glycyl lysine isopeptide (Lys-Gly) (interchain with G-Cter in SUMO2)" evidence="35 36 37">
    <location>
        <position position="407"/>
    </location>
</feature>
<feature type="cross-link" description="Glycyl lysine isopeptide (Lys-Gly) (interchain with G-Cter in SUMO2)" evidence="37">
    <location>
        <position position="408"/>
    </location>
</feature>
<feature type="splice variant" id="VSP_044482" description="In isoform 2, isoform 4 and isoform 5." evidence="25 27">
    <location>
        <begin position="93"/>
        <end position="146"/>
    </location>
</feature>
<feature type="splice variant" id="VSP_046246" description="In isoform 5." evidence="25">
    <location>
        <begin position="173"/>
        <end position="203"/>
    </location>
</feature>
<feature type="splice variant" id="VSP_047209" description="In isoform 6." evidence="26">
    <location>
        <position position="233"/>
    </location>
</feature>
<feature type="splice variant" id="VSP_044483" description="In isoform 3, isoform 4 and isoform 6." evidence="26 27">
    <original>CYNCEEEAMYHCCWNTSYCSIKCQQEHWHAEHKRTCRRKR</original>
    <variation>VNTSLF</variation>
    <location>
        <begin position="563"/>
        <end position="602"/>
    </location>
</feature>
<feature type="mutagenesis site" description="No effect on nuclear location." evidence="21">
    <original>CKNC</original>
    <variation>AKNA</variation>
    <location>
        <begin position="258"/>
        <end position="261"/>
    </location>
</feature>
<feature type="mutagenesis site" description="Abolishes binding to DNA. No effect on nuclear location." evidence="21">
    <original>K</original>
    <variation>A</variation>
    <location>
        <position position="287"/>
    </location>
</feature>
<feature type="mutagenesis site" description="Abolishes binding to DNA. No effect on nuclear location." evidence="21">
    <original>K</original>
    <variation>A</variation>
    <location>
        <position position="289"/>
    </location>
</feature>
<feature type="mutagenesis site" description="No effect on nuclear location." evidence="21">
    <original>F</original>
    <variation>A</variation>
    <location>
        <position position="291"/>
    </location>
</feature>
<feature type="mutagenesis site" description="Abolishes interaction with Histone 3. Diffused distribution in the nucleus." evidence="21">
    <original>W</original>
    <variation>A</variation>
    <location>
        <position position="294"/>
    </location>
</feature>
<feature type="mutagenesis site" description="Diffused distribution in the nucleus." evidence="21">
    <original>F</original>
    <variation>A</variation>
    <location>
        <position position="310"/>
    </location>
</feature>
<feature type="mutagenesis site" description="Decreases binding to DNA." evidence="21">
    <original>R</original>
    <variation>A</variation>
    <location>
        <position position="334"/>
    </location>
</feature>
<feature type="mutagenesis site" description="No effect on interaction with Histone 3. Abolishes binding to DNA. Changes location from nuclear to cytoplasmic." evidence="21">
    <original>KR</original>
    <variation>AA</variation>
    <location>
        <begin position="338"/>
        <end position="339"/>
    </location>
</feature>
<feature type="mutagenesis site" description="Abolishes binding to DNA. No effect on nuclear location." evidence="21">
    <original>KK</original>
    <variation>AA</variation>
    <location>
        <begin position="344"/>
        <end position="345"/>
    </location>
</feature>
<feature type="mutagenesis site" description="Reduced interaction with PXLXP ligand MGA without affecting interaction with viral human adenovirus early E1A protein." evidence="18">
    <original>W</original>
    <variation>Y</variation>
    <location>
        <position position="562"/>
    </location>
</feature>
<feature type="mutagenesis site" description="Abrogates binding to EZH2." evidence="14">
    <original>C</original>
    <variation>S</variation>
    <location>
        <position position="563"/>
    </location>
</feature>
<feature type="mutagenesis site" description="Reduced interaction with PXLXP ligand proteins." evidence="18">
    <original>EE</original>
    <variation>KK</variation>
    <location>
        <begin position="567"/>
        <end position="568"/>
    </location>
</feature>
<feature type="mutagenesis site" description="Decreases interaction with Epstein-Barr virus EBNA2 protein." evidence="24">
    <original>Y</original>
    <variation>A</variation>
    <location>
        <position position="572"/>
    </location>
</feature>
<feature type="mutagenesis site" description="Highly decreases interaction with Epstein-Barr virus EBNA2 protein. No effect on the inhibition of EBNA2-mediated transcriptional activation. Almost abolishes interaction with Epstein-Barr virus EBNA2 protein and inhibition of EBNA2-mediated transcriptional activation; when associated with A-590." evidence="24">
    <original>Q</original>
    <variation>A</variation>
    <location>
        <position position="586"/>
    </location>
</feature>
<feature type="mutagenesis site" description="Highly decreases interaction with Epstein-Barr virus EBNA2 protein. Almost abolishes interaction with Epstein-Barr virus EBNA2 protein and inhibition of EBNA2-mediated transcriptional activation; when associated with A-590." evidence="24">
    <original>W</original>
    <variation>A</variation>
    <location>
        <position position="590"/>
    </location>
</feature>
<feature type="mutagenesis site" description="Abolished interaction with PXLXP ligand proteins." evidence="18">
    <original>RRKR</original>
    <variation>GGGG</variation>
    <location>
        <begin position="599"/>
        <end position="602"/>
    </location>
</feature>
<feature type="mutagenesis site" description="Highly decreases interaction with Epstein-Barr virus EBNA2 protein." evidence="24">
    <original>R</original>
    <variation>A</variation>
    <location>
        <position position="600"/>
    </location>
</feature>
<feature type="helix" evidence="38">
    <location>
        <begin position="157"/>
        <end position="169"/>
    </location>
</feature>
<feature type="helix" evidence="38">
    <location>
        <begin position="198"/>
        <end position="206"/>
    </location>
</feature>
<feature type="helix" evidence="38">
    <location>
        <begin position="213"/>
        <end position="231"/>
    </location>
</feature>
<feature type="helix" evidence="38">
    <location>
        <begin position="236"/>
        <end position="257"/>
    </location>
</feature>
<feature type="helix" evidence="38">
    <location>
        <begin position="259"/>
        <end position="267"/>
    </location>
</feature>
<feature type="helix" evidence="38">
    <location>
        <begin position="272"/>
        <end position="274"/>
    </location>
</feature>
<feature type="strand" evidence="38">
    <location>
        <begin position="283"/>
        <end position="287"/>
    </location>
</feature>
<feature type="strand" evidence="38">
    <location>
        <begin position="293"/>
        <end position="302"/>
    </location>
</feature>
<feature type="strand" evidence="38">
    <location>
        <begin position="305"/>
        <end position="310"/>
    </location>
</feature>
<feature type="strand" evidence="38">
    <location>
        <begin position="317"/>
        <end position="321"/>
    </location>
</feature>
<feature type="helix" evidence="38">
    <location>
        <begin position="322"/>
        <end position="324"/>
    </location>
</feature>
<feature type="strand" evidence="38">
    <location>
        <begin position="325"/>
        <end position="327"/>
    </location>
</feature>
<feature type="helix" evidence="38">
    <location>
        <begin position="332"/>
        <end position="334"/>
    </location>
</feature>
<feature type="helix" evidence="38">
    <location>
        <begin position="341"/>
        <end position="359"/>
    </location>
</feature>
<feature type="helix" evidence="39">
    <location>
        <begin position="482"/>
        <end position="558"/>
    </location>
</feature>
<feature type="strand" evidence="39">
    <location>
        <begin position="562"/>
        <end position="566"/>
    </location>
</feature>
<feature type="strand" evidence="39">
    <location>
        <begin position="572"/>
        <end position="575"/>
    </location>
</feature>
<feature type="strand" evidence="39">
    <location>
        <begin position="578"/>
        <end position="582"/>
    </location>
</feature>
<feature type="helix" evidence="39">
    <location>
        <begin position="583"/>
        <end position="592"/>
    </location>
</feature>
<feature type="helix" evidence="39">
    <location>
        <begin position="594"/>
        <end position="596"/>
    </location>
</feature>
<proteinExistence type="evidence at protein level"/>
<evidence type="ECO:0000250" key="1">
    <source>
        <dbReference type="UniProtKB" id="Q8R5C8"/>
    </source>
</evidence>
<evidence type="ECO:0000255" key="2"/>
<evidence type="ECO:0000255" key="3">
    <source>
        <dbReference type="PROSITE-ProRule" id="PRU00035"/>
    </source>
</evidence>
<evidence type="ECO:0000255" key="4">
    <source>
        <dbReference type="PROSITE-ProRule" id="PRU00134"/>
    </source>
</evidence>
<evidence type="ECO:0000255" key="5">
    <source>
        <dbReference type="PROSITE-ProRule" id="PRU00146"/>
    </source>
</evidence>
<evidence type="ECO:0000255" key="6">
    <source>
        <dbReference type="PROSITE-ProRule" id="PRU00162"/>
    </source>
</evidence>
<evidence type="ECO:0000255" key="7">
    <source>
        <dbReference type="PROSITE-ProRule" id="PRU01358"/>
    </source>
</evidence>
<evidence type="ECO:0000256" key="8">
    <source>
        <dbReference type="SAM" id="MobiDB-lite"/>
    </source>
</evidence>
<evidence type="ECO:0000269" key="9">
    <source>
    </source>
</evidence>
<evidence type="ECO:0000269" key="10">
    <source>
    </source>
</evidence>
<evidence type="ECO:0000269" key="11">
    <source>
    </source>
</evidence>
<evidence type="ECO:0000269" key="12">
    <source>
    </source>
</evidence>
<evidence type="ECO:0000269" key="13">
    <source>
    </source>
</evidence>
<evidence type="ECO:0000269" key="14">
    <source>
    </source>
</evidence>
<evidence type="ECO:0000269" key="15">
    <source>
    </source>
</evidence>
<evidence type="ECO:0000269" key="16">
    <source>
    </source>
</evidence>
<evidence type="ECO:0000269" key="17">
    <source>
    </source>
</evidence>
<evidence type="ECO:0000269" key="18">
    <source>
    </source>
</evidence>
<evidence type="ECO:0000269" key="19">
    <source>
    </source>
</evidence>
<evidence type="ECO:0000269" key="20">
    <source>
    </source>
</evidence>
<evidence type="ECO:0000269" key="21">
    <source>
    </source>
</evidence>
<evidence type="ECO:0000269" key="22">
    <source>
    </source>
</evidence>
<evidence type="ECO:0000269" key="23">
    <source>
    </source>
</evidence>
<evidence type="ECO:0000269" key="24">
    <source>
    </source>
</evidence>
<evidence type="ECO:0000303" key="25">
    <source>
    </source>
</evidence>
<evidence type="ECO:0000303" key="26">
    <source>
    </source>
</evidence>
<evidence type="ECO:0000303" key="27">
    <source>
    </source>
</evidence>
<evidence type="ECO:0000303" key="28">
    <source>
    </source>
</evidence>
<evidence type="ECO:0000305" key="29"/>
<evidence type="ECO:0000312" key="30">
    <source>
        <dbReference type="HGNC" id="HGNC:16966"/>
    </source>
</evidence>
<evidence type="ECO:0007744" key="31">
    <source>
        <dbReference type="PDB" id="4NS5"/>
    </source>
</evidence>
<evidence type="ECO:0007744" key="32">
    <source>
        <dbReference type="PDB" id="5HDA"/>
    </source>
</evidence>
<evidence type="ECO:0007744" key="33">
    <source>
    </source>
</evidence>
<evidence type="ECO:0007744" key="34">
    <source>
    </source>
</evidence>
<evidence type="ECO:0007744" key="35">
    <source>
    </source>
</evidence>
<evidence type="ECO:0007744" key="36">
    <source>
    </source>
</evidence>
<evidence type="ECO:0007744" key="37">
    <source>
    </source>
</evidence>
<evidence type="ECO:0007829" key="38">
    <source>
        <dbReference type="PDB" id="4NS5"/>
    </source>
</evidence>
<evidence type="ECO:0007829" key="39">
    <source>
        <dbReference type="PDB" id="5HDA"/>
    </source>
</evidence>
<name>ZMY11_HUMAN</name>
<protein>
    <recommendedName>
        <fullName evidence="29">Zinc finger MYND domain-containing protein 11</fullName>
    </recommendedName>
    <alternativeName>
        <fullName>Adenovirus 5 E1A-binding protein</fullName>
    </alternativeName>
    <alternativeName>
        <fullName>Bone morphogenetic protein receptor-associated molecule 1</fullName>
    </alternativeName>
    <alternativeName>
        <fullName>Protein BS69</fullName>
    </alternativeName>
</protein>
<organism>
    <name type="scientific">Homo sapiens</name>
    <name type="common">Human</name>
    <dbReference type="NCBI Taxonomy" id="9606"/>
    <lineage>
        <taxon>Eukaryota</taxon>
        <taxon>Metazoa</taxon>
        <taxon>Chordata</taxon>
        <taxon>Craniata</taxon>
        <taxon>Vertebrata</taxon>
        <taxon>Euteleostomi</taxon>
        <taxon>Mammalia</taxon>
        <taxon>Eutheria</taxon>
        <taxon>Euarchontoglires</taxon>
        <taxon>Primates</taxon>
        <taxon>Haplorrhini</taxon>
        <taxon>Catarrhini</taxon>
        <taxon>Hominidae</taxon>
        <taxon>Homo</taxon>
    </lineage>
</organism>
<reference key="1">
    <citation type="journal article" date="1995" name="EMBO J.">
        <title>BS69, a novel adenovirus E1A-associated protein that inhibits E1A transactivation.</title>
        <authorList>
            <person name="Hateboer G."/>
            <person name="Gennissen A."/>
            <person name="Ramos Y.F.M."/>
            <person name="Kerkhoven R.M."/>
            <person name="Sonntag-Buck V."/>
            <person name="Stunnenberg H.G."/>
            <person name="Bernards R."/>
        </authorList>
    </citation>
    <scope>NUCLEOTIDE SEQUENCE [MRNA] (ISOFORM 1)</scope>
    <source>
        <tissue>Colon carcinoma</tissue>
    </source>
</reference>
<reference key="2">
    <citation type="journal article" date="2006" name="J. Biol. Chem.">
        <title>New insights into BS69 functions.</title>
        <authorList>
            <person name="Velasco G."/>
            <person name="Grkovic S."/>
            <person name="Ansieau S."/>
        </authorList>
    </citation>
    <scope>NUCLEOTIDE SEQUENCE [MRNA] (ISOFORMS 1; 2; 3 AND 4)</scope>
    <scope>ALTERNATIVE SPLICING</scope>
    <scope>SUBCELLULAR LOCATION</scope>
    <scope>TISSUE SPECIFICITY</scope>
    <scope>FUNCTION</scope>
    <scope>UBIQUITINATION</scope>
    <scope>INTERACTION WITH E2F6 AND EZH2</scope>
    <scope>MUTAGENESIS OF CYS-563</scope>
</reference>
<reference key="3">
    <citation type="journal article" date="2004" name="Nat. Genet.">
        <title>Complete sequencing and characterization of 21,243 full-length human cDNAs.</title>
        <authorList>
            <person name="Ota T."/>
            <person name="Suzuki Y."/>
            <person name="Nishikawa T."/>
            <person name="Otsuki T."/>
            <person name="Sugiyama T."/>
            <person name="Irie R."/>
            <person name="Wakamatsu A."/>
            <person name="Hayashi K."/>
            <person name="Sato H."/>
            <person name="Nagai K."/>
            <person name="Kimura K."/>
            <person name="Makita H."/>
            <person name="Sekine M."/>
            <person name="Obayashi M."/>
            <person name="Nishi T."/>
            <person name="Shibahara T."/>
            <person name="Tanaka T."/>
            <person name="Ishii S."/>
            <person name="Yamamoto J."/>
            <person name="Saito K."/>
            <person name="Kawai Y."/>
            <person name="Isono Y."/>
            <person name="Nakamura Y."/>
            <person name="Nagahari K."/>
            <person name="Murakami K."/>
            <person name="Yasuda T."/>
            <person name="Iwayanagi T."/>
            <person name="Wagatsuma M."/>
            <person name="Shiratori A."/>
            <person name="Sudo H."/>
            <person name="Hosoiri T."/>
            <person name="Kaku Y."/>
            <person name="Kodaira H."/>
            <person name="Kondo H."/>
            <person name="Sugawara M."/>
            <person name="Takahashi M."/>
            <person name="Kanda K."/>
            <person name="Yokoi T."/>
            <person name="Furuya T."/>
            <person name="Kikkawa E."/>
            <person name="Omura Y."/>
            <person name="Abe K."/>
            <person name="Kamihara K."/>
            <person name="Katsuta N."/>
            <person name="Sato K."/>
            <person name="Tanikawa M."/>
            <person name="Yamazaki M."/>
            <person name="Ninomiya K."/>
            <person name="Ishibashi T."/>
            <person name="Yamashita H."/>
            <person name="Murakawa K."/>
            <person name="Fujimori K."/>
            <person name="Tanai H."/>
            <person name="Kimata M."/>
            <person name="Watanabe M."/>
            <person name="Hiraoka S."/>
            <person name="Chiba Y."/>
            <person name="Ishida S."/>
            <person name="Ono Y."/>
            <person name="Takiguchi S."/>
            <person name="Watanabe S."/>
            <person name="Yosida M."/>
            <person name="Hotuta T."/>
            <person name="Kusano J."/>
            <person name="Kanehori K."/>
            <person name="Takahashi-Fujii A."/>
            <person name="Hara H."/>
            <person name="Tanase T.-O."/>
            <person name="Nomura Y."/>
            <person name="Togiya S."/>
            <person name="Komai F."/>
            <person name="Hara R."/>
            <person name="Takeuchi K."/>
            <person name="Arita M."/>
            <person name="Imose N."/>
            <person name="Musashino K."/>
            <person name="Yuuki H."/>
            <person name="Oshima A."/>
            <person name="Sasaki N."/>
            <person name="Aotsuka S."/>
            <person name="Yoshikawa Y."/>
            <person name="Matsunawa H."/>
            <person name="Ichihara T."/>
            <person name="Shiohata N."/>
            <person name="Sano S."/>
            <person name="Moriya S."/>
            <person name="Momiyama H."/>
            <person name="Satoh N."/>
            <person name="Takami S."/>
            <person name="Terashima Y."/>
            <person name="Suzuki O."/>
            <person name="Nakagawa S."/>
            <person name="Senoh A."/>
            <person name="Mizoguchi H."/>
            <person name="Goto Y."/>
            <person name="Shimizu F."/>
            <person name="Wakebe H."/>
            <person name="Hishigaki H."/>
            <person name="Watanabe T."/>
            <person name="Sugiyama A."/>
            <person name="Takemoto M."/>
            <person name="Kawakami B."/>
            <person name="Yamazaki M."/>
            <person name="Watanabe K."/>
            <person name="Kumagai A."/>
            <person name="Itakura S."/>
            <person name="Fukuzumi Y."/>
            <person name="Fujimori Y."/>
            <person name="Komiyama M."/>
            <person name="Tashiro H."/>
            <person name="Tanigami A."/>
            <person name="Fujiwara T."/>
            <person name="Ono T."/>
            <person name="Yamada K."/>
            <person name="Fujii Y."/>
            <person name="Ozaki K."/>
            <person name="Hirao M."/>
            <person name="Ohmori Y."/>
            <person name="Kawabata A."/>
            <person name="Hikiji T."/>
            <person name="Kobatake N."/>
            <person name="Inagaki H."/>
            <person name="Ikema Y."/>
            <person name="Okamoto S."/>
            <person name="Okitani R."/>
            <person name="Kawakami T."/>
            <person name="Noguchi S."/>
            <person name="Itoh T."/>
            <person name="Shigeta K."/>
            <person name="Senba T."/>
            <person name="Matsumura K."/>
            <person name="Nakajima Y."/>
            <person name="Mizuno T."/>
            <person name="Morinaga M."/>
            <person name="Sasaki M."/>
            <person name="Togashi T."/>
            <person name="Oyama M."/>
            <person name="Hata H."/>
            <person name="Watanabe M."/>
            <person name="Komatsu T."/>
            <person name="Mizushima-Sugano J."/>
            <person name="Satoh T."/>
            <person name="Shirai Y."/>
            <person name="Takahashi Y."/>
            <person name="Nakagawa K."/>
            <person name="Okumura K."/>
            <person name="Nagase T."/>
            <person name="Nomura N."/>
            <person name="Kikuchi H."/>
            <person name="Masuho Y."/>
            <person name="Yamashita R."/>
            <person name="Nakai K."/>
            <person name="Yada T."/>
            <person name="Nakamura Y."/>
            <person name="Ohara O."/>
            <person name="Isogai T."/>
            <person name="Sugano S."/>
        </authorList>
    </citation>
    <scope>NUCLEOTIDE SEQUENCE [LARGE SCALE MRNA] (ISOFORMS 1 AND 5)</scope>
    <source>
        <tissue>Amygdala</tissue>
        <tissue>Brain</tissue>
    </source>
</reference>
<reference key="4">
    <citation type="journal article" date="2004" name="Nature">
        <title>The DNA sequence and comparative analysis of human chromosome 10.</title>
        <authorList>
            <person name="Deloukas P."/>
            <person name="Earthrowl M.E."/>
            <person name="Grafham D.V."/>
            <person name="Rubenfield M."/>
            <person name="French L."/>
            <person name="Steward C.A."/>
            <person name="Sims S.K."/>
            <person name="Jones M.C."/>
            <person name="Searle S."/>
            <person name="Scott C."/>
            <person name="Howe K."/>
            <person name="Hunt S.E."/>
            <person name="Andrews T.D."/>
            <person name="Gilbert J.G.R."/>
            <person name="Swarbreck D."/>
            <person name="Ashurst J.L."/>
            <person name="Taylor A."/>
            <person name="Battles J."/>
            <person name="Bird C.P."/>
            <person name="Ainscough R."/>
            <person name="Almeida J.P."/>
            <person name="Ashwell R.I.S."/>
            <person name="Ambrose K.D."/>
            <person name="Babbage A.K."/>
            <person name="Bagguley C.L."/>
            <person name="Bailey J."/>
            <person name="Banerjee R."/>
            <person name="Bates K."/>
            <person name="Beasley H."/>
            <person name="Bray-Allen S."/>
            <person name="Brown A.J."/>
            <person name="Brown J.Y."/>
            <person name="Burford D.C."/>
            <person name="Burrill W."/>
            <person name="Burton J."/>
            <person name="Cahill P."/>
            <person name="Camire D."/>
            <person name="Carter N.P."/>
            <person name="Chapman J.C."/>
            <person name="Clark S.Y."/>
            <person name="Clarke G."/>
            <person name="Clee C.M."/>
            <person name="Clegg S."/>
            <person name="Corby N."/>
            <person name="Coulson A."/>
            <person name="Dhami P."/>
            <person name="Dutta I."/>
            <person name="Dunn M."/>
            <person name="Faulkner L."/>
            <person name="Frankish A."/>
            <person name="Frankland J.A."/>
            <person name="Garner P."/>
            <person name="Garnett J."/>
            <person name="Gribble S."/>
            <person name="Griffiths C."/>
            <person name="Grocock R."/>
            <person name="Gustafson E."/>
            <person name="Hammond S."/>
            <person name="Harley J.L."/>
            <person name="Hart E."/>
            <person name="Heath P.D."/>
            <person name="Ho T.P."/>
            <person name="Hopkins B."/>
            <person name="Horne J."/>
            <person name="Howden P.J."/>
            <person name="Huckle E."/>
            <person name="Hynds C."/>
            <person name="Johnson C."/>
            <person name="Johnson D."/>
            <person name="Kana A."/>
            <person name="Kay M."/>
            <person name="Kimberley A.M."/>
            <person name="Kershaw J.K."/>
            <person name="Kokkinaki M."/>
            <person name="Laird G.K."/>
            <person name="Lawlor S."/>
            <person name="Lee H.M."/>
            <person name="Leongamornlert D.A."/>
            <person name="Laird G."/>
            <person name="Lloyd C."/>
            <person name="Lloyd D.M."/>
            <person name="Loveland J."/>
            <person name="Lovell J."/>
            <person name="McLaren S."/>
            <person name="McLay K.E."/>
            <person name="McMurray A."/>
            <person name="Mashreghi-Mohammadi M."/>
            <person name="Matthews L."/>
            <person name="Milne S."/>
            <person name="Nickerson T."/>
            <person name="Nguyen M."/>
            <person name="Overton-Larty E."/>
            <person name="Palmer S.A."/>
            <person name="Pearce A.V."/>
            <person name="Peck A.I."/>
            <person name="Pelan S."/>
            <person name="Phillimore B."/>
            <person name="Porter K."/>
            <person name="Rice C.M."/>
            <person name="Rogosin A."/>
            <person name="Ross M.T."/>
            <person name="Sarafidou T."/>
            <person name="Sehra H.K."/>
            <person name="Shownkeen R."/>
            <person name="Skuce C.D."/>
            <person name="Smith M."/>
            <person name="Standring L."/>
            <person name="Sycamore N."/>
            <person name="Tester J."/>
            <person name="Thorpe A."/>
            <person name="Torcasso W."/>
            <person name="Tracey A."/>
            <person name="Tromans A."/>
            <person name="Tsolas J."/>
            <person name="Wall M."/>
            <person name="Walsh J."/>
            <person name="Wang H."/>
            <person name="Weinstock K."/>
            <person name="West A.P."/>
            <person name="Willey D.L."/>
            <person name="Whitehead S.L."/>
            <person name="Wilming L."/>
            <person name="Wray P.W."/>
            <person name="Young L."/>
            <person name="Chen Y."/>
            <person name="Lovering R.C."/>
            <person name="Moschonas N.K."/>
            <person name="Siebert R."/>
            <person name="Fechtel K."/>
            <person name="Bentley D."/>
            <person name="Durbin R.M."/>
            <person name="Hubbard T."/>
            <person name="Doucette-Stamm L."/>
            <person name="Beck S."/>
            <person name="Smith D.R."/>
            <person name="Rogers J."/>
        </authorList>
    </citation>
    <scope>NUCLEOTIDE SEQUENCE [LARGE SCALE GENOMIC DNA]</scope>
</reference>
<reference key="5">
    <citation type="submission" date="2005-09" db="EMBL/GenBank/DDBJ databases">
        <authorList>
            <person name="Mural R.J."/>
            <person name="Istrail S."/>
            <person name="Sutton G."/>
            <person name="Florea L."/>
            <person name="Halpern A.L."/>
            <person name="Mobarry C.M."/>
            <person name="Lippert R."/>
            <person name="Walenz B."/>
            <person name="Shatkay H."/>
            <person name="Dew I."/>
            <person name="Miller J.R."/>
            <person name="Flanigan M.J."/>
            <person name="Edwards N.J."/>
            <person name="Bolanos R."/>
            <person name="Fasulo D."/>
            <person name="Halldorsson B.V."/>
            <person name="Hannenhalli S."/>
            <person name="Turner R."/>
            <person name="Yooseph S."/>
            <person name="Lu F."/>
            <person name="Nusskern D.R."/>
            <person name="Shue B.C."/>
            <person name="Zheng X.H."/>
            <person name="Zhong F."/>
            <person name="Delcher A.L."/>
            <person name="Huson D.H."/>
            <person name="Kravitz S.A."/>
            <person name="Mouchard L."/>
            <person name="Reinert K."/>
            <person name="Remington K.A."/>
            <person name="Clark A.G."/>
            <person name="Waterman M.S."/>
            <person name="Eichler E.E."/>
            <person name="Adams M.D."/>
            <person name="Hunkapiller M.W."/>
            <person name="Myers E.W."/>
            <person name="Venter J.C."/>
        </authorList>
    </citation>
    <scope>NUCLEOTIDE SEQUENCE [LARGE SCALE GENOMIC DNA]</scope>
</reference>
<reference key="6">
    <citation type="journal article" date="2004" name="Genome Res.">
        <title>The status, quality, and expansion of the NIH full-length cDNA project: the Mammalian Gene Collection (MGC).</title>
        <authorList>
            <consortium name="The MGC Project Team"/>
        </authorList>
    </citation>
    <scope>NUCLEOTIDE SEQUENCE [LARGE SCALE MRNA] (ISOFORM 6)</scope>
    <source>
        <tissue>Brain</tissue>
    </source>
</reference>
<reference key="7">
    <citation type="journal article" date="2000" name="Oncogene">
        <title>The adenovirus E1A binding protein BS69 is a corepressor of transcription through recruitment of N-CoR.</title>
        <authorList>
            <person name="Masselink H."/>
            <person name="Bernards R."/>
        </authorList>
    </citation>
    <scope>FUNCTION</scope>
    <scope>INTERACTION WITH NCOR1</scope>
</reference>
<reference key="8">
    <citation type="journal article" date="2002" name="J. Biol. Chem.">
        <title>The conserved Mynd domain of BS69 binds cellular and oncoviral proteins through a common PXLXP motif.</title>
        <authorList>
            <person name="Ansieau S."/>
            <person name="Leutz A."/>
        </authorList>
    </citation>
    <scope>INTERACTION WITH HUMAN ADENOVIRUS EARLY E1A PROTEIN</scope>
    <scope>INTERACTION WITH EPSTEIN-BARR VIRUS EBNA2 PROTEIN</scope>
</reference>
<reference key="9">
    <citation type="journal article" date="2002" name="J. Biol. Chem.">
        <title>Negative regulation of Epstein-Barr virus latent membrane protein 1-mediated functions by the bone morphogenetic protein receptor IA-binding protein, BRAM1.</title>
        <authorList>
            <person name="Chung P.J."/>
            <person name="Chang Y.S."/>
            <person name="Liang C.L."/>
            <person name="Meng C.L."/>
        </authorList>
    </citation>
    <scope>INTERACTION WITH HUMAN EPSTEIN-BARR VIRUS PROTEIN LMP1</scope>
</reference>
<reference key="10">
    <citation type="journal article" date="2005" name="EMBO Rep.">
        <title>Binding of EMSY to HP1beta: implications for recruitment of HP1beta and BS69.</title>
        <authorList>
            <person name="Ekblad C.M.S."/>
            <person name="Chavali G.B."/>
            <person name="Basu B.P."/>
            <person name="Freund S.M.V."/>
            <person name="Veprintsev D."/>
            <person name="Hughes-Davies L."/>
            <person name="Kouzarides T."/>
            <person name="Doherty A.J."/>
            <person name="Itzhaki L.S."/>
        </authorList>
    </citation>
    <scope>INTERACTION WITH EMSY</scope>
</reference>
<reference key="11">
    <citation type="journal article" date="2006" name="Mol. Cell. Biol.">
        <title>BS69, a specific adaptor in the latent membrane protein 1-mediated c-Jun N-terminal kinase pathway.</title>
        <authorList>
            <person name="Wan J."/>
            <person name="Zhang W."/>
            <person name="Wu L."/>
            <person name="Bai T."/>
            <person name="Zhang M."/>
            <person name="Lo K.W."/>
            <person name="Chui Y.L."/>
            <person name="Cui Y."/>
            <person name="Tao Q."/>
            <person name="Yamamoto M."/>
            <person name="Akira S."/>
            <person name="Wu Z."/>
        </authorList>
    </citation>
    <scope>INTERACTION WITH HUMAN EPSTEIN-BARR VIRUS PROTEIN LMP1</scope>
</reference>
<reference key="12">
    <citation type="journal article" date="2007" name="Science">
        <title>ATM and ATR substrate analysis reveals extensive protein networks responsive to DNA damage.</title>
        <authorList>
            <person name="Matsuoka S."/>
            <person name="Ballif B.A."/>
            <person name="Smogorzewska A."/>
            <person name="McDonald E.R. III"/>
            <person name="Hurov K.E."/>
            <person name="Luo J."/>
            <person name="Bakalarski C.E."/>
            <person name="Zhao Z."/>
            <person name="Solimini N."/>
            <person name="Lerenthal Y."/>
            <person name="Shiloh Y."/>
            <person name="Gygi S.P."/>
            <person name="Elledge S.J."/>
        </authorList>
    </citation>
    <scope>IDENTIFICATION BY MASS SPECTROMETRY [LARGE SCALE ANALYSIS]</scope>
    <source>
        <tissue>Embryonic kidney</tissue>
    </source>
</reference>
<reference key="13">
    <citation type="journal article" date="2008" name="Proc. Natl. Acad. Sci. U.S.A.">
        <title>A quantitative atlas of mitotic phosphorylation.</title>
        <authorList>
            <person name="Dephoure N."/>
            <person name="Zhou C."/>
            <person name="Villen J."/>
            <person name="Beausoleil S.A."/>
            <person name="Bakalarski C.E."/>
            <person name="Elledge S.J."/>
            <person name="Gygi S.P."/>
        </authorList>
    </citation>
    <scope>PHOSPHORYLATION [LARGE SCALE ANALYSIS] AT SER-421</scope>
    <scope>IDENTIFICATION BY MASS SPECTROMETRY [LARGE SCALE ANALYSIS]</scope>
    <source>
        <tissue>Cervix carcinoma</tissue>
    </source>
</reference>
<reference key="14">
    <citation type="journal article" date="2009" name="FEBS Lett.">
        <title>BS69 negatively regulates the canonical NF-kappaB activation induced by Epstein-Barr virus-derived LMP1.</title>
        <authorList>
            <person name="Ikeda O."/>
            <person name="Sekine Y."/>
            <person name="Mizushima A."/>
            <person name="Oritani K."/>
            <person name="Yasui T."/>
            <person name="Fujimuro M."/>
            <person name="Muromoto R."/>
            <person name="Nanbo A."/>
            <person name="Matsuda T."/>
        </authorList>
    </citation>
    <scope>INTERACTION WITH HUMAN EPSTEIN-BARR VIRUS PROTEIN LMP1</scope>
</reference>
<reference key="15">
    <citation type="journal article" date="2009" name="Exp. Cell Res.">
        <title>BS69 undergoes SUMO modification and plays an inhibitory role in muscle and neuronal differentiation.</title>
        <authorList>
            <person name="Yu B."/>
            <person name="Shao Y."/>
            <person name="Zhang C."/>
            <person name="Chen Y."/>
            <person name="Zhong Q."/>
            <person name="Zhang J."/>
            <person name="Yang H."/>
            <person name="Zhang W."/>
            <person name="Wan J."/>
        </authorList>
    </citation>
    <scope>SUBCELLULAR LOCATION</scope>
    <scope>SUMOYLATION</scope>
    <scope>INTERACTION WITH PIAS1 AND UBE2I</scope>
</reference>
<reference key="16">
    <citation type="journal article" date="2010" name="FEBS Lett.">
        <title>BS69 cooperates with TRAF3 in the regulation of Epstein-Barr virus-derived LMP1/CTAR1-induced NF-kappaB activation.</title>
        <authorList>
            <person name="Ikeda O."/>
            <person name="Miyasaka Y."/>
            <person name="Yoshida R."/>
            <person name="Mizushima A."/>
            <person name="Oritani K."/>
            <person name="Sekine Y."/>
            <person name="Kuroda M."/>
            <person name="Yasui T."/>
            <person name="Fujimuro M."/>
            <person name="Muromoto R."/>
            <person name="Nanbo A."/>
            <person name="Matsuda T."/>
        </authorList>
    </citation>
    <scope>INTERACTION WITH HUMAN EPSTEIN-BARR VIRUS PROTEIN LMP1</scope>
</reference>
<reference key="17">
    <citation type="journal article" date="2010" name="Sci. Signal.">
        <title>Quantitative phosphoproteomics reveals widespread full phosphorylation site occupancy during mitosis.</title>
        <authorList>
            <person name="Olsen J.V."/>
            <person name="Vermeulen M."/>
            <person name="Santamaria A."/>
            <person name="Kumar C."/>
            <person name="Miller M.L."/>
            <person name="Jensen L.J."/>
            <person name="Gnad F."/>
            <person name="Cox J."/>
            <person name="Jensen T.S."/>
            <person name="Nigg E.A."/>
            <person name="Brunak S."/>
            <person name="Mann M."/>
        </authorList>
    </citation>
    <scope>IDENTIFICATION BY MASS SPECTROMETRY [LARGE SCALE ANALYSIS]</scope>
    <source>
        <tissue>Cervix carcinoma</tissue>
    </source>
</reference>
<reference key="18">
    <citation type="journal article" date="2013" name="J. Proteome Res.">
        <title>Toward a comprehensive characterization of a human cancer cell phosphoproteome.</title>
        <authorList>
            <person name="Zhou H."/>
            <person name="Di Palma S."/>
            <person name="Preisinger C."/>
            <person name="Peng M."/>
            <person name="Polat A.N."/>
            <person name="Heck A.J."/>
            <person name="Mohammed S."/>
        </authorList>
    </citation>
    <scope>PHOSPHORYLATION [LARGE SCALE ANALYSIS] AT SER-421</scope>
    <scope>IDENTIFICATION BY MASS SPECTROMETRY [LARGE SCALE ANALYSIS]</scope>
    <source>
        <tissue>Cervix carcinoma</tissue>
        <tissue>Erythroleukemia</tissue>
    </source>
</reference>
<reference key="19">
    <citation type="journal article" date="2014" name="Leuk. Lymphoma">
        <title>Recurrent translocation (10;17)(p15;q21) in acute poorly differentiated myeloid leukemia likely results in ZMYND11-MBTD1 fusion.</title>
        <authorList>
            <person name="De Braekeleer E."/>
            <person name="Auffret R."/>
            <person name="Douet-Guilbert N."/>
            <person name="Basinko A."/>
            <person name="Le Bris M.J."/>
            <person name="Morel F."/>
            <person name="De Braekeleer M."/>
        </authorList>
    </citation>
    <scope>CHROMOSOMAL TRANSLOCATION WITH MBTD1</scope>
</reference>
<reference key="20">
    <citation type="journal article" date="2013" name="PLoS ONE">
        <title>Structural and functional analysis of the DEAF-1 and BS69 MYND domains.</title>
        <authorList>
            <person name="Kateb F."/>
            <person name="Perrin H."/>
            <person name="Tripsianes K."/>
            <person name="Zou P."/>
            <person name="Spadaccini R."/>
            <person name="Bottomley M."/>
            <person name="Franzmann T.M."/>
            <person name="Buchner J."/>
            <person name="Ansieau S."/>
            <person name="Sattler M."/>
        </authorList>
    </citation>
    <scope>INTERACTION WITH HUMAN ADENOVIRUS EARLY E1A PROTEIN</scope>
    <scope>INTERACTION WITH EPSTEIN-BARR VIRUS EBNA2 PROTEIN</scope>
    <scope>INTERACTION WITH MGA</scope>
    <scope>MUTAGENESIS OF TRP-562; 567-GLU-GLU-568 AND 599-ARG--ARG-602</scope>
</reference>
<reference key="21">
    <citation type="journal article" date="2014" name="Nat. Struct. Mol. Biol.">
        <title>Uncovering global SUMOylation signaling networks in a site-specific manner.</title>
        <authorList>
            <person name="Hendriks I.A."/>
            <person name="D'Souza R.C."/>
            <person name="Yang B."/>
            <person name="Verlaan-de Vries M."/>
            <person name="Mann M."/>
            <person name="Vertegaal A.C."/>
        </authorList>
    </citation>
    <scope>SUMOYLATION [LARGE SCALE ANALYSIS] AT LYS-407</scope>
    <scope>IDENTIFICATION BY MASS SPECTROMETRY [LARGE SCALE ANALYSIS]</scope>
</reference>
<reference key="22">
    <citation type="journal article" date="2014" name="Nature">
        <title>ZMYND11 links histone H3.3K36me3 to transcription elongation and tumour suppression.</title>
        <authorList>
            <person name="Wen H."/>
            <person name="Li Y."/>
            <person name="Xi Y."/>
            <person name="Jiang S."/>
            <person name="Stratton S."/>
            <person name="Peng D."/>
            <person name="Tanaka K."/>
            <person name="Ren Y."/>
            <person name="Xia Z."/>
            <person name="Wu J."/>
            <person name="Li B."/>
            <person name="Barton M.C."/>
            <person name="Li W."/>
            <person name="Li H."/>
            <person name="Shi X."/>
        </authorList>
    </citation>
    <scope>INDUCTION</scope>
</reference>
<reference key="23">
    <citation type="journal article" date="2014" name="Nat. Genet.">
        <title>Refining analyses of copy number variation identifies specific genes associated with developmental delay.</title>
        <authorList>
            <person name="Coe B.P."/>
            <person name="Witherspoon K."/>
            <person name="Rosenfeld J.A."/>
            <person name="van Bon B.W."/>
            <person name="Vulto-van Silfhout A.T."/>
            <person name="Bosco P."/>
            <person name="Friend K.L."/>
            <person name="Baker C."/>
            <person name="Buono S."/>
            <person name="Vissers L.E."/>
            <person name="Schuurs-Hoeijmakers J.H."/>
            <person name="Hoischen A."/>
            <person name="Pfundt R."/>
            <person name="Krumm N."/>
            <person name="Carvill G.L."/>
            <person name="Li D."/>
            <person name="Amaral D."/>
            <person name="Brown N."/>
            <person name="Lockhart P.J."/>
            <person name="Scheffer I.E."/>
            <person name="Alberti A."/>
            <person name="Shaw M."/>
            <person name="Pettinato R."/>
            <person name="Tervo R."/>
            <person name="de Leeuw N."/>
            <person name="Reijnders M.R."/>
            <person name="Torchia B.S."/>
            <person name="Peeters H."/>
            <person name="O'Roak B.J."/>
            <person name="Fichera M."/>
            <person name="Hehir-Kwa J.Y."/>
            <person name="Shendure J."/>
            <person name="Mefford H.C."/>
            <person name="Haan E."/>
            <person name="Gecz J."/>
            <person name="de Vries B.B."/>
            <person name="Romano C."/>
            <person name="Eichler E.E."/>
        </authorList>
    </citation>
    <scope>INVOLVEMENT IN MRD30</scope>
</reference>
<reference key="24">
    <citation type="journal article" date="2015" name="Cell Rep.">
        <title>SUMO-2 orchestrates chromatin modifiers in response to DNA damage.</title>
        <authorList>
            <person name="Hendriks I.A."/>
            <person name="Treffers L.W."/>
            <person name="Verlaan-de Vries M."/>
            <person name="Olsen J.V."/>
            <person name="Vertegaal A.C."/>
        </authorList>
    </citation>
    <scope>SUMOYLATION [LARGE SCALE ANALYSIS] AT LYS-407</scope>
    <scope>IDENTIFICATION BY MASS SPECTROMETRY [LARGE SCALE ANALYSIS]</scope>
</reference>
<reference key="25">
    <citation type="journal article" date="2015" name="Genes Dev.">
        <title>Screen identifies bromodomain protein ZMYND8 in chromatin recognition of transcription-associated DNA damage that promotes homologous recombination.</title>
        <authorList>
            <person name="Gong F."/>
            <person name="Chiu L.Y."/>
            <person name="Cox B."/>
            <person name="Aymard F."/>
            <person name="Clouaire T."/>
            <person name="Leung J.W."/>
            <person name="Cammarata M."/>
            <person name="Perez M."/>
            <person name="Agarwal P."/>
            <person name="Brodbelt J.S."/>
            <person name="Legube G."/>
            <person name="Miller K.M."/>
        </authorList>
    </citation>
    <scope>SUBCELLULAR LOCATION</scope>
</reference>
<reference key="26">
    <citation type="journal article" date="2016" name="J. Biol. Chem.">
        <title>Selective Recognition of H3.1K36 Dimethylation/H4K16 Acetylation Facilitates the Regulation of All-trans-retinoic Acid (ATRA)-responsive Genes by Putative Chromatin Reader ZMYND8.</title>
        <authorList>
            <person name="Adhikary S."/>
            <person name="Sanyal S."/>
            <person name="Basu M."/>
            <person name="Sengupta I."/>
            <person name="Sen S."/>
            <person name="Srivastava D.K."/>
            <person name="Roy S."/>
            <person name="Das C."/>
        </authorList>
    </citation>
    <scope>INTERACTION WITH HISTONE H3</scope>
</reference>
<reference key="27">
    <citation type="journal article" date="2017" name="Nat. Struct. Mol. Biol.">
        <title>Site-specific mapping of the human SUMO proteome reveals co-modification with phosphorylation.</title>
        <authorList>
            <person name="Hendriks I.A."/>
            <person name="Lyon D."/>
            <person name="Young C."/>
            <person name="Jensen L.J."/>
            <person name="Vertegaal A.C."/>
            <person name="Nielsen M.L."/>
        </authorList>
    </citation>
    <scope>SUMOYLATION [LARGE SCALE ANALYSIS] AT LYS-366; LYS-407 AND LYS-408</scope>
    <scope>IDENTIFICATION BY MASS SPECTROMETRY [LARGE SCALE ANALYSIS]</scope>
</reference>
<reference key="28">
    <citation type="journal article" date="2014" name="Cell Res.">
        <title>Crystal structure of human BS69 Bromo-ZnF-PWWP reveals its role in H3K36me3 nucleosome binding.</title>
        <authorList>
            <person name="Wang J."/>
            <person name="Qin S."/>
            <person name="Li F."/>
            <person name="Li S."/>
            <person name="Zhang W."/>
            <person name="Peng J."/>
            <person name="Zhang Z."/>
            <person name="Gong Q."/>
            <person name="Wu J."/>
            <person name="Shi Y."/>
        </authorList>
    </citation>
    <scope>X-RAY CRYSTALLOGRAPHY (1.90 ANGSTROMS) OF 154-371 IN COMPLEX WITH ZINC</scope>
    <scope>INTERACTION WITH HISTONE 3</scope>
    <scope>SUBCELLULAR LOCATION</scope>
    <scope>DNA-BINDING</scope>
    <scope>DOMAIN</scope>
    <scope>MUTAGENESIS OF 258-CYS--CYS-261; LYS-287; LYS-289; PHE-291; TRP-294; PHE-310; ARG-334; 338-LYS-ARG-339 AND 344-LYS-LYS-345</scope>
    <scope>FUNCTION</scope>
</reference>
<reference evidence="32" key="29">
    <citation type="journal article" date="2016" name="PLoS Pathog.">
        <title>BS69/ZMYND11 C-Terminal Domains Bind and Inhibit EBNA2.</title>
        <authorList>
            <person name="Harter M.R."/>
            <person name="Liu C.D."/>
            <person name="Shen C.L."/>
            <person name="Gonzalez-Hurtado E."/>
            <person name="Zhang Z.M."/>
            <person name="Xu M."/>
            <person name="Martinez E."/>
            <person name="Peng C.W."/>
            <person name="Song J."/>
        </authorList>
    </citation>
    <scope>X-RAY CRYSTALLOGRAPHY (2.39 ANGSTROMS) OF 480-602 IN COMPLEX WITH ZINC AND EPSTEIN-BARR VIRUS EBNA2 PEPTIDE</scope>
    <scope>SUBUNIT</scope>
    <scope>INTERACTION WITH EPSTEIN-BARR VIRUS EBNA2 PROTEIN</scope>
    <scope>FUNCTION (MICROBIAL INFECTION)</scope>
    <scope>MUTAGENESIS OF TYR-572; GLN-586; TRP-590 AND ARG-600</scope>
</reference>
<keyword id="KW-0002">3D-structure</keyword>
<keyword id="KW-0025">Alternative splicing</keyword>
<keyword id="KW-0103">Bromodomain</keyword>
<keyword id="KW-0131">Cell cycle</keyword>
<keyword id="KW-0156">Chromatin regulator</keyword>
<keyword id="KW-0160">Chromosomal rearrangement</keyword>
<keyword id="KW-0158">Chromosome</keyword>
<keyword id="KW-0238">DNA-binding</keyword>
<keyword id="KW-0945">Host-virus interaction</keyword>
<keyword id="KW-0991">Intellectual disability</keyword>
<keyword id="KW-1017">Isopeptide bond</keyword>
<keyword id="KW-0479">Metal-binding</keyword>
<keyword id="KW-0539">Nucleus</keyword>
<keyword id="KW-0597">Phosphoprotein</keyword>
<keyword id="KW-1267">Proteomics identification</keyword>
<keyword id="KW-1185">Reference proteome</keyword>
<keyword id="KW-0678">Repressor</keyword>
<keyword id="KW-0804">Transcription</keyword>
<keyword id="KW-0805">Transcription regulation</keyword>
<keyword id="KW-0043">Tumor suppressor</keyword>
<keyword id="KW-0832">Ubl conjugation</keyword>
<keyword id="KW-0862">Zinc</keyword>
<keyword id="KW-0863">Zinc-finger</keyword>
<dbReference type="EMBL" id="X86098">
    <property type="protein sequence ID" value="CAA60052.1"/>
    <property type="status" value="ALT_FRAME"/>
    <property type="molecule type" value="mRNA"/>
</dbReference>
<dbReference type="EMBL" id="DQ335452">
    <property type="protein sequence ID" value="ABC72408.1"/>
    <property type="molecule type" value="mRNA"/>
</dbReference>
<dbReference type="EMBL" id="DQ335453">
    <property type="protein sequence ID" value="ABC72409.1"/>
    <property type="molecule type" value="mRNA"/>
</dbReference>
<dbReference type="EMBL" id="DQ335454">
    <property type="protein sequence ID" value="ABC72410.1"/>
    <property type="molecule type" value="mRNA"/>
</dbReference>
<dbReference type="EMBL" id="DQ335455">
    <property type="protein sequence ID" value="ABC72411.1"/>
    <property type="molecule type" value="mRNA"/>
</dbReference>
<dbReference type="EMBL" id="AK294469">
    <property type="protein sequence ID" value="BAH11779.1"/>
    <property type="molecule type" value="mRNA"/>
</dbReference>
<dbReference type="EMBL" id="AK312570">
    <property type="protein sequence ID" value="BAG35465.1"/>
    <property type="status" value="ALT_INIT"/>
    <property type="molecule type" value="mRNA"/>
</dbReference>
<dbReference type="EMBL" id="AL589988">
    <property type="status" value="NOT_ANNOTATED_CDS"/>
    <property type="molecule type" value="Genomic_DNA"/>
</dbReference>
<dbReference type="EMBL" id="AL603831">
    <property type="status" value="NOT_ANNOTATED_CDS"/>
    <property type="molecule type" value="Genomic_DNA"/>
</dbReference>
<dbReference type="EMBL" id="AL713922">
    <property type="status" value="NOT_ANNOTATED_CDS"/>
    <property type="molecule type" value="Genomic_DNA"/>
</dbReference>
<dbReference type="EMBL" id="AL731539">
    <property type="status" value="NOT_ANNOTATED_CDS"/>
    <property type="molecule type" value="Genomic_DNA"/>
</dbReference>
<dbReference type="EMBL" id="CH471072">
    <property type="protein sequence ID" value="EAW86539.1"/>
    <property type="molecule type" value="Genomic_DNA"/>
</dbReference>
<dbReference type="EMBL" id="CH471072">
    <property type="protein sequence ID" value="EAW86540.1"/>
    <property type="molecule type" value="Genomic_DNA"/>
</dbReference>
<dbReference type="EMBL" id="CH471072">
    <property type="protein sequence ID" value="EAW86541.1"/>
    <property type="molecule type" value="Genomic_DNA"/>
</dbReference>
<dbReference type="EMBL" id="BC034784">
    <property type="protein sequence ID" value="AAH34784.1"/>
    <property type="status" value="ALT_INIT"/>
    <property type="molecule type" value="mRNA"/>
</dbReference>
<dbReference type="CCDS" id="CCDS55696.1">
    <molecule id="Q15326-3"/>
</dbReference>
<dbReference type="CCDS" id="CCDS55697.1">
    <molecule id="Q15326-5"/>
</dbReference>
<dbReference type="CCDS" id="CCDS7052.2">
    <molecule id="Q15326-1"/>
</dbReference>
<dbReference type="CCDS" id="CCDS7053.2">
    <molecule id="Q15326-6"/>
</dbReference>
<dbReference type="CCDS" id="CCDS73060.1">
    <molecule id="Q15326-2"/>
</dbReference>
<dbReference type="CCDS" id="CCDS91197.1">
    <molecule id="Q15326-4"/>
</dbReference>
<dbReference type="PIR" id="S56145">
    <property type="entry name" value="S56145"/>
</dbReference>
<dbReference type="RefSeq" id="NP_001189393.1">
    <molecule id="Q15326-2"/>
    <property type="nucleotide sequence ID" value="NM_001202464.3"/>
</dbReference>
<dbReference type="RefSeq" id="NP_001189394.1">
    <molecule id="Q15326-5"/>
    <property type="nucleotide sequence ID" value="NM_001202465.3"/>
</dbReference>
<dbReference type="RefSeq" id="NP_001189396.1">
    <molecule id="Q15326-4"/>
    <property type="nucleotide sequence ID" value="NM_001202467.1"/>
</dbReference>
<dbReference type="RefSeq" id="NP_001189397.1">
    <molecule id="Q15326-3"/>
    <property type="nucleotide sequence ID" value="NM_001202468.1"/>
</dbReference>
<dbReference type="RefSeq" id="NP_001357026.1">
    <molecule id="Q15326-1"/>
    <property type="nucleotide sequence ID" value="NM_001370097.3"/>
</dbReference>
<dbReference type="RefSeq" id="NP_001357027.1">
    <molecule id="Q15326-1"/>
    <property type="nucleotide sequence ID" value="NM_001370098.2"/>
</dbReference>
<dbReference type="RefSeq" id="NP_001357028.1">
    <molecule id="Q15326-1"/>
    <property type="nucleotide sequence ID" value="NM_001370099.2"/>
</dbReference>
<dbReference type="RefSeq" id="NP_001357029.1">
    <molecule id="Q15326-1"/>
    <property type="nucleotide sequence ID" value="NM_001370100.5"/>
</dbReference>
<dbReference type="RefSeq" id="NP_001357030.1">
    <molecule id="Q15326-1"/>
    <property type="nucleotide sequence ID" value="NM_001370101.2"/>
</dbReference>
<dbReference type="RefSeq" id="NP_001357031.1">
    <molecule id="Q15326-1"/>
    <property type="nucleotide sequence ID" value="NM_001370102.2"/>
</dbReference>
<dbReference type="RefSeq" id="NP_001357032.1">
    <molecule id="Q15326-2"/>
    <property type="nucleotide sequence ID" value="NM_001370103.2"/>
</dbReference>
<dbReference type="RefSeq" id="NP_001357033.1">
    <molecule id="Q15326-2"/>
    <property type="nucleotide sequence ID" value="NM_001370104.2"/>
</dbReference>
<dbReference type="RefSeq" id="NP_001357034.1">
    <molecule id="Q15326-2"/>
    <property type="nucleotide sequence ID" value="NM_001370105.2"/>
</dbReference>
<dbReference type="RefSeq" id="NP_001357035.1">
    <molecule id="Q15326-2"/>
    <property type="nucleotide sequence ID" value="NM_001370106.2"/>
</dbReference>
<dbReference type="RefSeq" id="NP_001357036.1">
    <molecule id="Q15326-2"/>
    <property type="nucleotide sequence ID" value="NM_001370107.2"/>
</dbReference>
<dbReference type="RefSeq" id="NP_001357037.1">
    <molecule id="Q15326-2"/>
    <property type="nucleotide sequence ID" value="NM_001370108.2"/>
</dbReference>
<dbReference type="RefSeq" id="NP_001357038.1">
    <molecule id="Q15326-2"/>
    <property type="nucleotide sequence ID" value="NM_001370109.2"/>
</dbReference>
<dbReference type="RefSeq" id="NP_001357039.1">
    <molecule id="Q15326-5"/>
    <property type="nucleotide sequence ID" value="NM_001370110.2"/>
</dbReference>
<dbReference type="RefSeq" id="NP_006615.2">
    <molecule id="Q15326-1"/>
    <property type="nucleotide sequence ID" value="NM_006624.7"/>
</dbReference>
<dbReference type="RefSeq" id="NP_997644.2">
    <molecule id="Q15326-6"/>
    <property type="nucleotide sequence ID" value="NM_212479.4"/>
</dbReference>
<dbReference type="RefSeq" id="XP_005252416.1">
    <property type="nucleotide sequence ID" value="XM_005252359.4"/>
</dbReference>
<dbReference type="RefSeq" id="XP_005252418.1">
    <property type="nucleotide sequence ID" value="XM_005252361.3"/>
</dbReference>
<dbReference type="RefSeq" id="XP_005252419.1">
    <property type="nucleotide sequence ID" value="XM_005252362.2"/>
</dbReference>
<dbReference type="RefSeq" id="XP_006717439.1">
    <property type="nucleotide sequence ID" value="XM_006717376.2"/>
</dbReference>
<dbReference type="RefSeq" id="XP_016871076.1">
    <property type="nucleotide sequence ID" value="XM_017015587.1"/>
</dbReference>
<dbReference type="RefSeq" id="XP_016871077.1">
    <property type="nucleotide sequence ID" value="XM_017015588.1"/>
</dbReference>
<dbReference type="RefSeq" id="XP_016871078.1">
    <property type="nucleotide sequence ID" value="XM_017015589.1"/>
</dbReference>
<dbReference type="RefSeq" id="XP_016871079.1">
    <property type="nucleotide sequence ID" value="XM_017015590.1"/>
</dbReference>
<dbReference type="RefSeq" id="XP_016871081.1">
    <property type="nucleotide sequence ID" value="XM_017015592.1"/>
</dbReference>
<dbReference type="RefSeq" id="XP_016871082.1">
    <property type="nucleotide sequence ID" value="XM_017015593.1"/>
</dbReference>
<dbReference type="PDB" id="4NS5">
    <property type="method" value="X-ray"/>
    <property type="resolution" value="1.90 A"/>
    <property type="chains" value="A=154-371"/>
</dbReference>
<dbReference type="PDB" id="5HDA">
    <property type="method" value="X-ray"/>
    <property type="resolution" value="2.39 A"/>
    <property type="chains" value="A/C=480-602"/>
</dbReference>
<dbReference type="PDBsum" id="4NS5"/>
<dbReference type="PDBsum" id="5HDA"/>
<dbReference type="SASBDB" id="Q15326"/>
<dbReference type="SMR" id="Q15326"/>
<dbReference type="BioGRID" id="115989">
    <property type="interactions" value="99"/>
</dbReference>
<dbReference type="ELM" id="Q15326"/>
<dbReference type="FunCoup" id="Q15326">
    <property type="interactions" value="3198"/>
</dbReference>
<dbReference type="IntAct" id="Q15326">
    <property type="interactions" value="56"/>
</dbReference>
<dbReference type="MINT" id="Q15326"/>
<dbReference type="STRING" id="9606.ENSP00000371003"/>
<dbReference type="ChEMBL" id="CHEMBL4739854"/>
<dbReference type="GlyGen" id="Q15326">
    <property type="glycosylation" value="1 site, 1 O-linked glycan (1 site)"/>
</dbReference>
<dbReference type="iPTMnet" id="Q15326"/>
<dbReference type="PhosphoSitePlus" id="Q15326"/>
<dbReference type="SwissPalm" id="Q15326"/>
<dbReference type="BioMuta" id="ZMYND11"/>
<dbReference type="DMDM" id="425906058"/>
<dbReference type="jPOST" id="Q15326"/>
<dbReference type="MassIVE" id="Q15326"/>
<dbReference type="PaxDb" id="9606-ENSP00000381053"/>
<dbReference type="PeptideAtlas" id="Q15326"/>
<dbReference type="ProteomicsDB" id="28024"/>
<dbReference type="ProteomicsDB" id="60529">
    <molecule id="Q15326-1"/>
</dbReference>
<dbReference type="ProteomicsDB" id="61337"/>
<dbReference type="ProteomicsDB" id="6423"/>
<dbReference type="Pumba" id="Q15326"/>
<dbReference type="Antibodypedia" id="9245">
    <property type="antibodies" value="246 antibodies from 30 providers"/>
</dbReference>
<dbReference type="DNASU" id="10771"/>
<dbReference type="Ensembl" id="ENST00000381591.5">
    <molecule id="Q15326-1"/>
    <property type="protein sequence ID" value="ENSP00000371003.1"/>
    <property type="gene ID" value="ENSG00000015171.21"/>
</dbReference>
<dbReference type="Ensembl" id="ENST00000381604.9">
    <molecule id="Q15326-1"/>
    <property type="protein sequence ID" value="ENSP00000371017.6"/>
    <property type="gene ID" value="ENSG00000015171.21"/>
</dbReference>
<dbReference type="Ensembl" id="ENST00000397962.8">
    <molecule id="Q15326-1"/>
    <property type="protein sequence ID" value="ENSP00000381053.3"/>
    <property type="gene ID" value="ENSG00000015171.21"/>
</dbReference>
<dbReference type="Ensembl" id="ENST00000509513.6">
    <molecule id="Q15326-6"/>
    <property type="protein sequence ID" value="ENSP00000424205.2"/>
    <property type="gene ID" value="ENSG00000015171.21"/>
</dbReference>
<dbReference type="Ensembl" id="ENST00000558098.4">
    <molecule id="Q15326-3"/>
    <property type="protein sequence ID" value="ENSP00000452959.1"/>
    <property type="gene ID" value="ENSG00000015171.21"/>
</dbReference>
<dbReference type="Ensembl" id="ENST00000602682.6">
    <molecule id="Q15326-5"/>
    <property type="protein sequence ID" value="ENSP00000473321.1"/>
    <property type="gene ID" value="ENSG00000015171.21"/>
</dbReference>
<dbReference type="Ensembl" id="ENST00000704295.1">
    <molecule id="Q15326-2"/>
    <property type="protein sequence ID" value="ENSP00000515819.1"/>
    <property type="gene ID" value="ENSG00000015171.21"/>
</dbReference>
<dbReference type="Ensembl" id="ENST00000704301.1">
    <molecule id="Q15326-1"/>
    <property type="protein sequence ID" value="ENSP00000515825.1"/>
    <property type="gene ID" value="ENSG00000015171.21"/>
</dbReference>
<dbReference type="Ensembl" id="ENST00000704303.1">
    <molecule id="Q15326-2"/>
    <property type="protein sequence ID" value="ENSP00000515827.1"/>
    <property type="gene ID" value="ENSG00000015171.21"/>
</dbReference>
<dbReference type="Ensembl" id="ENST00000704335.1">
    <molecule id="Q15326-4"/>
    <property type="protein sequence ID" value="ENSP00000515849.1"/>
    <property type="gene ID" value="ENSG00000015171.21"/>
</dbReference>
<dbReference type="GeneID" id="10771"/>
<dbReference type="KEGG" id="hsa:10771"/>
<dbReference type="MANE-Select" id="ENST00000381604.9">
    <property type="protein sequence ID" value="ENSP00000371017.6"/>
    <property type="RefSeq nucleotide sequence ID" value="NM_001370100.5"/>
    <property type="RefSeq protein sequence ID" value="NP_001357029.1"/>
</dbReference>
<dbReference type="UCSC" id="uc001ifk.4">
    <molecule id="Q15326-1"/>
    <property type="organism name" value="human"/>
</dbReference>
<dbReference type="AGR" id="HGNC:16966"/>
<dbReference type="CTD" id="10771"/>
<dbReference type="DisGeNET" id="10771"/>
<dbReference type="GeneCards" id="ZMYND11"/>
<dbReference type="HGNC" id="HGNC:16966">
    <property type="gene designation" value="ZMYND11"/>
</dbReference>
<dbReference type="HPA" id="ENSG00000015171">
    <property type="expression patterns" value="Low tissue specificity"/>
</dbReference>
<dbReference type="MalaCards" id="ZMYND11"/>
<dbReference type="MIM" id="608668">
    <property type="type" value="gene"/>
</dbReference>
<dbReference type="MIM" id="616083">
    <property type="type" value="phenotype"/>
</dbReference>
<dbReference type="neXtProt" id="NX_Q15326"/>
<dbReference type="OpenTargets" id="ENSG00000015171"/>
<dbReference type="Orphanet" id="687424">
    <property type="disease" value="ZMYND11-related developmental delay-speech delay-seizures-behavioral abnormalities-craniofacial dysmorphism syndrome due to 10p15.3 microdeletion"/>
</dbReference>
<dbReference type="Orphanet" id="694308">
    <property type="disease" value="ZMYND11-related developmental delay-speech delay-seizures-behavioral abnormalities-craniofacial dysmorphism syndrome due to a point mutation"/>
</dbReference>
<dbReference type="PharmGKB" id="PA128394578"/>
<dbReference type="VEuPathDB" id="HostDB:ENSG00000015171"/>
<dbReference type="eggNOG" id="KOG3612">
    <property type="taxonomic scope" value="Eukaryota"/>
</dbReference>
<dbReference type="GeneTree" id="ENSGT00940000156942"/>
<dbReference type="HOGENOM" id="CLU_031462_2_0_1"/>
<dbReference type="InParanoid" id="Q15326"/>
<dbReference type="OMA" id="QCHRVYH"/>
<dbReference type="OrthoDB" id="6272564at2759"/>
<dbReference type="PAN-GO" id="Q15326">
    <property type="GO annotations" value="4 GO annotations based on evolutionary models"/>
</dbReference>
<dbReference type="PhylomeDB" id="Q15326"/>
<dbReference type="TreeFam" id="TF106407"/>
<dbReference type="PathwayCommons" id="Q15326"/>
<dbReference type="SignaLink" id="Q15326"/>
<dbReference type="SIGNOR" id="Q15326"/>
<dbReference type="BioGRID-ORCS" id="10771">
    <property type="hits" value="17 hits in 1177 CRISPR screens"/>
</dbReference>
<dbReference type="ChiTaRS" id="ZMYND11">
    <property type="organism name" value="human"/>
</dbReference>
<dbReference type="EvolutionaryTrace" id="Q15326"/>
<dbReference type="GeneWiki" id="ZMYND11"/>
<dbReference type="GenomeRNAi" id="10771"/>
<dbReference type="Pharos" id="Q15326">
    <property type="development level" value="Tbio"/>
</dbReference>
<dbReference type="PRO" id="PR:Q15326"/>
<dbReference type="Proteomes" id="UP000005640">
    <property type="component" value="Chromosome 10"/>
</dbReference>
<dbReference type="RNAct" id="Q15326">
    <property type="molecule type" value="protein"/>
</dbReference>
<dbReference type="Bgee" id="ENSG00000015171">
    <property type="expression patterns" value="Expressed in cranial nerve II and 214 other cell types or tissues"/>
</dbReference>
<dbReference type="ExpressionAtlas" id="Q15326">
    <property type="expression patterns" value="baseline and differential"/>
</dbReference>
<dbReference type="GO" id="GO:0005694">
    <property type="term" value="C:chromosome"/>
    <property type="evidence" value="ECO:0007669"/>
    <property type="project" value="UniProtKB-SubCell"/>
</dbReference>
<dbReference type="GO" id="GO:0005654">
    <property type="term" value="C:nucleoplasm"/>
    <property type="evidence" value="ECO:0000314"/>
    <property type="project" value="HPA"/>
</dbReference>
<dbReference type="GO" id="GO:0005634">
    <property type="term" value="C:nucleus"/>
    <property type="evidence" value="ECO:0000314"/>
    <property type="project" value="UniProtKB"/>
</dbReference>
<dbReference type="GO" id="GO:0003690">
    <property type="term" value="F:double-stranded DNA binding"/>
    <property type="evidence" value="ECO:0000314"/>
    <property type="project" value="UniProtKB"/>
</dbReference>
<dbReference type="GO" id="GO:0140003">
    <property type="term" value="F:histone H3K36me3 reader activity"/>
    <property type="evidence" value="ECO:0000314"/>
    <property type="project" value="UniProtKB"/>
</dbReference>
<dbReference type="GO" id="GO:0035064">
    <property type="term" value="F:methylated histone binding"/>
    <property type="evidence" value="ECO:0000318"/>
    <property type="project" value="GO_Central"/>
</dbReference>
<dbReference type="GO" id="GO:0003714">
    <property type="term" value="F:transcription corepressor activity"/>
    <property type="evidence" value="ECO:0000250"/>
    <property type="project" value="UniProtKB"/>
</dbReference>
<dbReference type="GO" id="GO:0008270">
    <property type="term" value="F:zinc ion binding"/>
    <property type="evidence" value="ECO:0000314"/>
    <property type="project" value="UniProtKB"/>
</dbReference>
<dbReference type="GO" id="GO:0051607">
    <property type="term" value="P:defense response to virus"/>
    <property type="evidence" value="ECO:0000314"/>
    <property type="project" value="UniProtKB"/>
</dbReference>
<dbReference type="GO" id="GO:0043124">
    <property type="term" value="P:negative regulation of canonical NF-kappaB signal transduction"/>
    <property type="evidence" value="ECO:0000315"/>
    <property type="project" value="UniProtKB"/>
</dbReference>
<dbReference type="GO" id="GO:0045892">
    <property type="term" value="P:negative regulation of DNA-templated transcription"/>
    <property type="evidence" value="ECO:0000304"/>
    <property type="project" value="GO_Central"/>
</dbReference>
<dbReference type="GO" id="GO:2001237">
    <property type="term" value="P:negative regulation of extrinsic apoptotic signaling pathway"/>
    <property type="evidence" value="ECO:0000315"/>
    <property type="project" value="UniProtKB"/>
</dbReference>
<dbReference type="GO" id="GO:0046329">
    <property type="term" value="P:negative regulation of JNK cascade"/>
    <property type="evidence" value="ECO:0000315"/>
    <property type="project" value="UniProtKB"/>
</dbReference>
<dbReference type="GO" id="GO:0009966">
    <property type="term" value="P:regulation of signal transduction"/>
    <property type="evidence" value="ECO:0000318"/>
    <property type="project" value="GO_Central"/>
</dbReference>
<dbReference type="GO" id="GO:0034243">
    <property type="term" value="P:regulation of transcription elongation by RNA polymerase II"/>
    <property type="evidence" value="ECO:0000250"/>
    <property type="project" value="UniProtKB"/>
</dbReference>
<dbReference type="CDD" id="cd05492">
    <property type="entry name" value="Bromo_ZMYND11"/>
    <property type="match status" value="1"/>
</dbReference>
<dbReference type="CDD" id="cd15537">
    <property type="entry name" value="PHD_BS69"/>
    <property type="match status" value="1"/>
</dbReference>
<dbReference type="CDD" id="cd20159">
    <property type="entry name" value="PWWP_BS69"/>
    <property type="match status" value="1"/>
</dbReference>
<dbReference type="FunFam" id="6.10.140.2220:FF:000002">
    <property type="entry name" value="Protein kinase C-binding protein 1 isoform C"/>
    <property type="match status" value="1"/>
</dbReference>
<dbReference type="FunFam" id="2.30.30.140:FF:000011">
    <property type="entry name" value="Zinc finger MYND domain-containing protein 11"/>
    <property type="match status" value="1"/>
</dbReference>
<dbReference type="FunFam" id="3.30.40.10:FF:000081">
    <property type="entry name" value="Zinc finger MYND domain-containing protein 11"/>
    <property type="match status" value="1"/>
</dbReference>
<dbReference type="FunFam" id="1.20.920.10:FF:000012">
    <property type="entry name" value="zinc finger MYND domain-containing protein 11 isoform X1"/>
    <property type="match status" value="1"/>
</dbReference>
<dbReference type="Gene3D" id="2.30.30.140">
    <property type="match status" value="1"/>
</dbReference>
<dbReference type="Gene3D" id="6.10.140.2220">
    <property type="match status" value="1"/>
</dbReference>
<dbReference type="Gene3D" id="1.20.920.10">
    <property type="entry name" value="Bromodomain-like"/>
    <property type="match status" value="1"/>
</dbReference>
<dbReference type="Gene3D" id="3.30.40.10">
    <property type="entry name" value="Zinc/RING finger domain, C3HC4 (zinc finger)"/>
    <property type="match status" value="1"/>
</dbReference>
<dbReference type="InterPro" id="IPR001487">
    <property type="entry name" value="Bromodomain"/>
</dbReference>
<dbReference type="InterPro" id="IPR036427">
    <property type="entry name" value="Bromodomain-like_sf"/>
</dbReference>
<dbReference type="InterPro" id="IPR057053">
    <property type="entry name" value="MYND_ZMYND11_ZMYD8"/>
</dbReference>
<dbReference type="InterPro" id="IPR047268">
    <property type="entry name" value="PWWP_BS69"/>
</dbReference>
<dbReference type="InterPro" id="IPR000313">
    <property type="entry name" value="PWWP_dom"/>
</dbReference>
<dbReference type="InterPro" id="IPR048589">
    <property type="entry name" value="SAMD1-like_WH"/>
</dbReference>
<dbReference type="InterPro" id="IPR019786">
    <property type="entry name" value="Zinc_finger_PHD-type_CS"/>
</dbReference>
<dbReference type="InterPro" id="IPR047269">
    <property type="entry name" value="ZMY11"/>
</dbReference>
<dbReference type="InterPro" id="IPR057054">
    <property type="entry name" value="ZMYND11_CC"/>
</dbReference>
<dbReference type="InterPro" id="IPR011011">
    <property type="entry name" value="Znf_FYVE_PHD"/>
</dbReference>
<dbReference type="InterPro" id="IPR002893">
    <property type="entry name" value="Znf_MYND"/>
</dbReference>
<dbReference type="InterPro" id="IPR001965">
    <property type="entry name" value="Znf_PHD"/>
</dbReference>
<dbReference type="InterPro" id="IPR019787">
    <property type="entry name" value="Znf_PHD-finger"/>
</dbReference>
<dbReference type="InterPro" id="IPR013083">
    <property type="entry name" value="Znf_RING/FYVE/PHD"/>
</dbReference>
<dbReference type="PANTHER" id="PTHR46379">
    <property type="entry name" value="ZINC FINGER MYND DOMAIN-CONTAINING"/>
    <property type="match status" value="1"/>
</dbReference>
<dbReference type="PANTHER" id="PTHR46379:SF1">
    <property type="entry name" value="ZINC FINGER MYND DOMAIN-CONTAINING PROTEIN 11"/>
    <property type="match status" value="1"/>
</dbReference>
<dbReference type="Pfam" id="PF00439">
    <property type="entry name" value="Bromodomain"/>
    <property type="match status" value="1"/>
</dbReference>
<dbReference type="Pfam" id="PF24324">
    <property type="entry name" value="MYND_ZMYND11_ZMYD8"/>
    <property type="match status" value="1"/>
</dbReference>
<dbReference type="Pfam" id="PF00855">
    <property type="entry name" value="PWWP"/>
    <property type="match status" value="1"/>
</dbReference>
<dbReference type="Pfam" id="PF21524">
    <property type="entry name" value="SAMD1_WH"/>
    <property type="match status" value="1"/>
</dbReference>
<dbReference type="Pfam" id="PF23461">
    <property type="entry name" value="ZMYND11_CC"/>
    <property type="match status" value="1"/>
</dbReference>
<dbReference type="SMART" id="SM00297">
    <property type="entry name" value="BROMO"/>
    <property type="match status" value="1"/>
</dbReference>
<dbReference type="SMART" id="SM00249">
    <property type="entry name" value="PHD"/>
    <property type="match status" value="1"/>
</dbReference>
<dbReference type="SMART" id="SM00293">
    <property type="entry name" value="PWWP"/>
    <property type="match status" value="1"/>
</dbReference>
<dbReference type="SUPFAM" id="SSF47370">
    <property type="entry name" value="Bromodomain"/>
    <property type="match status" value="1"/>
</dbReference>
<dbReference type="SUPFAM" id="SSF57903">
    <property type="entry name" value="FYVE/PHD zinc finger"/>
    <property type="match status" value="1"/>
</dbReference>
<dbReference type="SUPFAM" id="SSF144232">
    <property type="entry name" value="HIT/MYND zinc finger-like"/>
    <property type="match status" value="1"/>
</dbReference>
<dbReference type="SUPFAM" id="SSF63748">
    <property type="entry name" value="Tudor/PWWP/MBT"/>
    <property type="match status" value="1"/>
</dbReference>
<dbReference type="PROSITE" id="PS50014">
    <property type="entry name" value="BROMODOMAIN_2"/>
    <property type="match status" value="1"/>
</dbReference>
<dbReference type="PROSITE" id="PS50812">
    <property type="entry name" value="PWWP"/>
    <property type="match status" value="1"/>
</dbReference>
<dbReference type="PROSITE" id="PS52014">
    <property type="entry name" value="SAMD1_WH"/>
    <property type="match status" value="1"/>
</dbReference>
<dbReference type="PROSITE" id="PS01360">
    <property type="entry name" value="ZF_MYND_1"/>
    <property type="match status" value="1"/>
</dbReference>
<dbReference type="PROSITE" id="PS50865">
    <property type="entry name" value="ZF_MYND_2"/>
    <property type="match status" value="1"/>
</dbReference>
<dbReference type="PROSITE" id="PS01359">
    <property type="entry name" value="ZF_PHD_1"/>
    <property type="match status" value="1"/>
</dbReference>
<dbReference type="PROSITE" id="PS50016">
    <property type="entry name" value="ZF_PHD_2"/>
    <property type="match status" value="1"/>
</dbReference>
<gene>
    <name evidence="30" type="primary">ZMYND11</name>
    <name type="synonym">BRAM1</name>
    <name evidence="28" type="synonym">BS69</name>
</gene>
<comment type="function">
    <text evidence="1 9 14 21">Chromatin reader that specifically recognizes and binds histone H3.3 trimethylated at 'Lys-36' (H3.3K36me3) and regulates RNA polymerase II elongation. Does not bind other histone H3 subtypes (H3.1 or H3.2) (By similarity). Colocalizes with highly expressed genes and functions as a transcription corepressor by modulating RNA polymerase II at the elongation stage. Binds non-specifically to dsDNA (PubMed:24675531). Acts as a tumor-suppressor by repressing a transcriptional program essential for tumor cell growth.</text>
</comment>
<comment type="function">
    <text evidence="24">(Microbial infection) Inhibits Epstein-Barr virus EBNA2-mediated transcriptional activation and host cell proliferation, through direct interaction.</text>
</comment>
<comment type="subunit">
    <text evidence="9 12 14 16 18 21 24">Homooligomer; forms homooligomers via its C-terminus (PubMed:26845565). Interacts with histone H3.3 trimethylated at 'Lys-36' (H3.3K36me3) (PubMed:24675531, PubMed:26655721). Interacts (via MYND-type zinc finger) with NCOR1 (PubMed:10734313). Interacts (via MYND-type zinc finger) with MGA protein (via PXLXP motif) (PubMed:23372760). Interacts (via MYND-type zinc finger) with EZH2 (PubMed:16565076). Interacts with EMSY and E2F6 (PubMed:15947784, PubMed:16565076). Interacts with PIAS1 and UBE2I (PubMed:19766626).</text>
</comment>
<comment type="subunit">
    <text evidence="10 18">(Microbial infection) Interacts (via MYND-type zinc finger) with human adenovirus early E1A protein (via PXLXP motif); this interaction inhibits E1A mediated transactivation.</text>
</comment>
<comment type="subunit">
    <text evidence="10 11 13 15 17 24">(Microbial infection) Interacts (via MYND-type zinc finger) with Epstein-Barr virus EBNA2 protein (via PXLXP motif) (PubMed:11733528, PubMed:26845565). Interacts with Epstein-Barr virus-derived protein LMP1; leading to negatively regulate NF-kappa-B activation by Epstein-Barr virus-derived protein LMP1 (PubMed:12181323, PubMed:16382137, PubMed:19379743, PubMed:20138174).</text>
</comment>
<comment type="interaction">
    <interactant intactId="EBI-2623509">
        <id>Q15326</id>
    </interactant>
    <interactant intactId="EBI-3509981">
        <id>P36941</id>
        <label>LTBR</label>
    </interactant>
    <organismsDiffer>false</organismsDiffer>
    <experiments>5</experiments>
</comment>
<comment type="interaction">
    <interactant intactId="EBI-2623509">
        <id>Q15326</id>
    </interactant>
    <interactant intactId="EBI-357631">
        <id>Q13114</id>
        <label>TRAF3</label>
    </interactant>
    <organismsDiffer>false</organismsDiffer>
    <experiments>2</experiments>
</comment>
<comment type="interaction">
    <interactant intactId="EBI-2623509">
        <id>Q15326</id>
    </interactant>
    <interactant intactId="EBI-347767">
        <id>Q9UKY1</id>
        <label>ZHX1</label>
    </interactant>
    <organismsDiffer>false</organismsDiffer>
    <experiments>2</experiments>
</comment>
<comment type="interaction">
    <interactant intactId="EBI-2623509">
        <id>Q15326</id>
    </interactant>
    <interactant intactId="EBI-8052923">
        <id>P12978</id>
        <label>EBNA2</label>
    </interactant>
    <organismsDiffer>true</organismsDiffer>
    <experiments>2</experiments>
</comment>
<comment type="interaction">
    <interactant intactId="EBI-2623509">
        <id>Q15326</id>
    </interactant>
    <interactant intactId="EBI-6973030">
        <id>P03230</id>
        <label>LMP1</label>
    </interactant>
    <organismsDiffer>true</organismsDiffer>
    <experiments>3</experiments>
</comment>
<comment type="interaction">
    <interactant intactId="EBI-2623509">
        <id>Q15326</id>
    </interactant>
    <interactant intactId="EBI-2603114">
        <id>P03255</id>
    </interactant>
    <organismsDiffer>true</organismsDiffer>
    <experiments>3</experiments>
</comment>
<comment type="subcellular location">
    <subcellularLocation>
        <location evidence="14 16 21 23">Nucleus</location>
    </subcellularLocation>
    <subcellularLocation>
        <location evidence="14">Chromosome</location>
    </subcellularLocation>
    <text evidence="14">Associates with chromatin and mitotic chromosomes.</text>
</comment>
<comment type="alternative products">
    <event type="alternative splicing"/>
    <isoform>
        <id>Q15326-1</id>
        <name>1</name>
        <sequence type="displayed"/>
    </isoform>
    <isoform>
        <id>Q15326-2</id>
        <name>2</name>
        <sequence type="described" ref="VSP_044482"/>
    </isoform>
    <isoform>
        <id>Q15326-3</id>
        <name>3</name>
        <sequence type="described" ref="VSP_044483"/>
    </isoform>
    <isoform>
        <id>Q15326-4</id>
        <name>4</name>
        <sequence type="described" ref="VSP_044482 VSP_044483"/>
    </isoform>
    <isoform>
        <id>Q15326-5</id>
        <name>5</name>
        <sequence type="described" ref="VSP_044482 VSP_046246"/>
    </isoform>
    <isoform>
        <id>Q15326-6</id>
        <name>6</name>
        <sequence type="described" ref="VSP_047209 VSP_044483"/>
    </isoform>
</comment>
<comment type="tissue specificity">
    <text evidence="14">Ubiquitous.</text>
</comment>
<comment type="induction">
    <text evidence="20">Down-regulated in breast cancer patients with poor prognosis.</text>
</comment>
<comment type="domain">
    <text evidence="21">The PWWP domain specifically recognizes and binds histone H3.3 trimethylated at 'Lys-36' (H3.3K36me3) and adopts a five-bladed beta-barrel fold with an extended C-terminal alpha-helix, with a conserved H3.3K36me3-binding aromatic cage formed by Phe-291 and Trp-294 of the beta1-beta2 loop and Phe-310 of the beta3-beta4 loop. Specific recognition of H3.3 histone is mediated by the encapsulation of the H3.3-specific 'Ser 31' residue in a composite pocket formed by the tandem bromo-PWWP domains.</text>
</comment>
<comment type="PTM">
    <text evidence="16">Sumoylated following its interaction with PIAS1 and UBE2I.</text>
</comment>
<comment type="PTM">
    <text evidence="14">Ubiquitinated, leading to proteasomal degradation.</text>
</comment>
<comment type="disease">
    <text evidence="19">A chromosomal aberration involving ZMYND11 is a cause of acute poorly differentiated myeloid leukemia. Translocation (10;17)(p15;q21) with MBTD1.</text>
</comment>
<comment type="disease" evidence="22">
    <disease id="DI-04257">
        <name>Intellectual developmental disorder, autosomal dominant 30, with speech delay and behavioral abnormalities</name>
        <acronym>MRD30</acronym>
        <description>A disorder characterized by significantly below average general intellectual functioning associated with impairments in adaptive behavior and manifested during the developmental period. MRD30 patients manifest intellectual disability, speech delay, and subtle facial dysmorphisms, including hypertelorism, ptosis, and a wide mouth. Behavioral abnormalities, including attention deficit-hyperactivity disorder, autistic features, and aggression are commonly observed.</description>
        <dbReference type="MIM" id="616083"/>
    </disease>
    <text>The disease is caused by variants affecting the gene represented in this entry.</text>
</comment>
<comment type="sequence caution" evidence="29">
    <conflict type="erroneous initiation">
        <sequence resource="EMBL-CDS" id="AAH34784"/>
    </conflict>
    <text>Truncated N-terminus.</text>
</comment>
<comment type="sequence caution" evidence="29">
    <conflict type="erroneous initiation">
        <sequence resource="EMBL-CDS" id="BAG35465"/>
    </conflict>
    <text>Truncated N-terminus.</text>
</comment>
<comment type="sequence caution" evidence="29">
    <conflict type="frameshift">
        <sequence resource="EMBL-CDS" id="CAA60052"/>
    </conflict>
</comment>
<accession>Q15326</accession>
<accession>B2R6G8</accession>
<accession>B7Z293</accession>
<accession>F6UH50</accession>
<accession>Q2LD45</accession>
<accession>Q2LD46</accession>
<accession>Q2LD47</accession>
<accession>Q2LD48</accession>
<accession>Q5VUI1</accession>
<accession>Q8N4B3</accession>